<comment type="function">
    <text evidence="2">Catalyzes the Fe(2+) and alpha-ketoglutarate-dependent oxidation of pentalenolactone D to pentalenolactone F. Also able to catalyze the oxidation of pentalenolactone D to pentalenolactone E. In presence of neopentalenolactone D, mediates production of PL308 and possibly neopentalenolactone E.</text>
</comment>
<comment type="catalytic activity">
    <reaction evidence="2">
        <text>pentalenolactone D + 2 2-oxoglutarate + 2 O2 = pentalenolactone F + 2 succinate + 2 CO2 + H2O</text>
        <dbReference type="Rhea" id="RHEA:34579"/>
        <dbReference type="ChEBI" id="CHEBI:15377"/>
        <dbReference type="ChEBI" id="CHEBI:15379"/>
        <dbReference type="ChEBI" id="CHEBI:16526"/>
        <dbReference type="ChEBI" id="CHEBI:16810"/>
        <dbReference type="ChEBI" id="CHEBI:30031"/>
        <dbReference type="ChEBI" id="CHEBI:70787"/>
        <dbReference type="ChEBI" id="CHEBI:70789"/>
        <dbReference type="EC" id="1.14.11.36"/>
    </reaction>
</comment>
<comment type="cofactor">
    <cofactor evidence="2">
        <name>Fe(2+)</name>
        <dbReference type="ChEBI" id="CHEBI:29033"/>
    </cofactor>
    <text evidence="2">Binds 1 Fe(2+) ion per subunit.</text>
</comment>
<comment type="activity regulation">
    <text evidence="1">Activated by ascorbate.</text>
</comment>
<comment type="pathway">
    <text evidence="2">Antibiotic biosynthesis; neopentalenolactone biosynthesis.</text>
</comment>
<comment type="disruption phenotype">
    <text evidence="2">Accumulation of pentalenolactone D.</text>
</comment>
<comment type="miscellaneous">
    <text evidence="4">S.avermitilis does not produce pentalenolactone itself in vivo but instead a group of new metabolites that are neopentalenolactone derivatives.</text>
</comment>
<comment type="similarity">
    <text evidence="3">Belongs to the TfdA dioxygenase family.</text>
</comment>
<sequence>MSRAMDITRIPGSAIGAVVAGADFSGTIDDTQVEEIWQALDQHLVLVFRGHKDPSNDDLLMFARRFGHVPKTGLTTGASPDHNEILLISNILDENGQKIGVGNAEWMDWHTDYSFRPRVSRIGFLAAVELPPSGGGQTLFTDMYTAYESLPDDLRQRLHSYRARHSLRSGYEDVIEEEYQGEVSIEGPTAKPFVAPEDGTATVHQLIARNPRTGRRAVYANPLNTKRILELDVTSSKEVLQQLFAKPGEPELTYAHEWLPGDIVMWDQLGTVHAKRAFDPTERRLLRKVVTIFDDPAEPWHPEDAA</sequence>
<evidence type="ECO:0000250" key="1"/>
<evidence type="ECO:0000269" key="2">
    <source>
    </source>
</evidence>
<evidence type="ECO:0000305" key="3"/>
<evidence type="ECO:0000305" key="4">
    <source>
    </source>
</evidence>
<feature type="chain" id="PRO_0000422006" description="Pentalenolactone F synthase">
    <location>
        <begin position="1"/>
        <end position="306"/>
    </location>
</feature>
<feature type="binding site" evidence="1">
    <location>
        <position position="110"/>
    </location>
    <ligand>
        <name>Fe cation</name>
        <dbReference type="ChEBI" id="CHEBI:24875"/>
        <note>catalytic</note>
    </ligand>
</feature>
<feature type="binding site" evidence="1">
    <location>
        <position position="112"/>
    </location>
    <ligand>
        <name>Fe cation</name>
        <dbReference type="ChEBI" id="CHEBI:24875"/>
        <note>catalytic</note>
    </ligand>
</feature>
<feature type="binding site" evidence="1">
    <location>
        <position position="138"/>
    </location>
    <ligand>
        <name>2-oxoglutarate</name>
        <dbReference type="ChEBI" id="CHEBI:16810"/>
    </ligand>
</feature>
<feature type="binding site" evidence="1">
    <location>
        <position position="258"/>
    </location>
    <ligand>
        <name>2-oxoglutarate</name>
        <dbReference type="ChEBI" id="CHEBI:16810"/>
    </ligand>
</feature>
<feature type="binding site" evidence="1">
    <location>
        <position position="273"/>
    </location>
    <ligand>
        <name>Fe cation</name>
        <dbReference type="ChEBI" id="CHEBI:24875"/>
        <note>catalytic</note>
    </ligand>
</feature>
<feature type="binding site" evidence="1">
    <location>
        <position position="284"/>
    </location>
    <ligand>
        <name>2-oxoglutarate</name>
        <dbReference type="ChEBI" id="CHEBI:16810"/>
    </ligand>
</feature>
<protein>
    <recommendedName>
        <fullName>Pentalenolactone F synthase</fullName>
        <ecNumber>1.14.11.36</ecNumber>
    </recommendedName>
    <alternativeName>
        <fullName>Neopentalenolactone F synthase</fullName>
        <ecNumber>1.14.11.-</ecNumber>
    </alternativeName>
    <alternativeName>
        <fullName>Neopentalenolactone biosynthesis protein D</fullName>
    </alternativeName>
</protein>
<name>PTLD_STRAW</name>
<organism>
    <name type="scientific">Streptomyces avermitilis (strain ATCC 31267 / DSM 46492 / JCM 5070 / NBRC 14893 / NCIMB 12804 / NRRL 8165 / MA-4680)</name>
    <dbReference type="NCBI Taxonomy" id="227882"/>
    <lineage>
        <taxon>Bacteria</taxon>
        <taxon>Bacillati</taxon>
        <taxon>Actinomycetota</taxon>
        <taxon>Actinomycetes</taxon>
        <taxon>Kitasatosporales</taxon>
        <taxon>Streptomycetaceae</taxon>
        <taxon>Streptomyces</taxon>
    </lineage>
</organism>
<dbReference type="EC" id="1.14.11.36"/>
<dbReference type="EC" id="1.14.11.-"/>
<dbReference type="EMBL" id="BA000030">
    <property type="protein sequence ID" value="BAC70706.1"/>
    <property type="molecule type" value="Genomic_DNA"/>
</dbReference>
<dbReference type="SMR" id="Q82IY7"/>
<dbReference type="KEGG" id="sma:SAVERM_2995"/>
<dbReference type="eggNOG" id="COG2175">
    <property type="taxonomic scope" value="Bacteria"/>
</dbReference>
<dbReference type="HOGENOM" id="CLU_036005_2_0_11"/>
<dbReference type="OrthoDB" id="581608at2"/>
<dbReference type="BioCyc" id="MetaCyc:MONOMERMETA-16852"/>
<dbReference type="UniPathway" id="UPA01021"/>
<dbReference type="Proteomes" id="UP000000428">
    <property type="component" value="Chromosome"/>
</dbReference>
<dbReference type="GO" id="GO:0016706">
    <property type="term" value="F:2-oxoglutarate-dependent dioxygenase activity"/>
    <property type="evidence" value="ECO:0000314"/>
    <property type="project" value="UniProtKB"/>
</dbReference>
<dbReference type="GO" id="GO:0008198">
    <property type="term" value="F:ferrous iron binding"/>
    <property type="evidence" value="ECO:0000314"/>
    <property type="project" value="UniProtKB"/>
</dbReference>
<dbReference type="GO" id="GO:0031418">
    <property type="term" value="F:L-ascorbic acid binding"/>
    <property type="evidence" value="ECO:0007669"/>
    <property type="project" value="UniProtKB-KW"/>
</dbReference>
<dbReference type="GO" id="GO:0017000">
    <property type="term" value="P:antibiotic biosynthetic process"/>
    <property type="evidence" value="ECO:0000314"/>
    <property type="project" value="UniProtKB"/>
</dbReference>
<dbReference type="GO" id="GO:1901336">
    <property type="term" value="P:lactone biosynthetic process"/>
    <property type="evidence" value="ECO:0000314"/>
    <property type="project" value="UniProtKB"/>
</dbReference>
<dbReference type="FunFam" id="3.60.130.10:FF:000024">
    <property type="entry name" value="Pentalenolactone F synthase"/>
    <property type="match status" value="1"/>
</dbReference>
<dbReference type="Gene3D" id="3.60.130.10">
    <property type="entry name" value="Clavaminate synthase-like"/>
    <property type="match status" value="1"/>
</dbReference>
<dbReference type="InterPro" id="IPR054973">
    <property type="entry name" value="PentlctneF_syn"/>
</dbReference>
<dbReference type="InterPro" id="IPR042098">
    <property type="entry name" value="TauD-like_sf"/>
</dbReference>
<dbReference type="InterPro" id="IPR003819">
    <property type="entry name" value="TauD/TfdA-like"/>
</dbReference>
<dbReference type="InterPro" id="IPR051178">
    <property type="entry name" value="TfdA_dioxygenase"/>
</dbReference>
<dbReference type="NCBIfam" id="NF045815">
    <property type="entry name" value="Neo-PentlctneFsynPtlD"/>
    <property type="match status" value="1"/>
</dbReference>
<dbReference type="PANTHER" id="PTHR43779:SF3">
    <property type="entry name" value="(3R)-3-[(CARBOXYMETHYL)AMINO]FATTY ACID OXYGENASE_DECARBOXYLASE"/>
    <property type="match status" value="1"/>
</dbReference>
<dbReference type="PANTHER" id="PTHR43779">
    <property type="entry name" value="DIOXYGENASE RV0097-RELATED"/>
    <property type="match status" value="1"/>
</dbReference>
<dbReference type="Pfam" id="PF02668">
    <property type="entry name" value="TauD"/>
    <property type="match status" value="1"/>
</dbReference>
<dbReference type="SUPFAM" id="SSF51197">
    <property type="entry name" value="Clavaminate synthase-like"/>
    <property type="match status" value="1"/>
</dbReference>
<gene>
    <name type="primary">ptlD</name>
    <name type="ordered locus">SAV_2995</name>
</gene>
<reference key="1">
    <citation type="journal article" date="2001" name="Proc. Natl. Acad. Sci. U.S.A.">
        <title>Genome sequence of an industrial microorganism Streptomyces avermitilis: deducing the ability of producing secondary metabolites.</title>
        <authorList>
            <person name="Omura S."/>
            <person name="Ikeda H."/>
            <person name="Ishikawa J."/>
            <person name="Hanamoto A."/>
            <person name="Takahashi C."/>
            <person name="Shinose M."/>
            <person name="Takahashi Y."/>
            <person name="Horikawa H."/>
            <person name="Nakazawa H."/>
            <person name="Osonoe T."/>
            <person name="Kikuchi H."/>
            <person name="Shiba T."/>
            <person name="Sakaki Y."/>
            <person name="Hattori M."/>
        </authorList>
    </citation>
    <scope>NUCLEOTIDE SEQUENCE [LARGE SCALE GENOMIC DNA]</scope>
    <source>
        <strain>ATCC 31267 / DSM 46492 / JCM 5070 / NBRC 14893 / NCIMB 12804 / NRRL 8165 / MA-4680</strain>
    </source>
</reference>
<reference key="2">
    <citation type="journal article" date="2003" name="Nat. Biotechnol.">
        <title>Complete genome sequence and comparative analysis of the industrial microorganism Streptomyces avermitilis.</title>
        <authorList>
            <person name="Ikeda H."/>
            <person name="Ishikawa J."/>
            <person name="Hanamoto A."/>
            <person name="Shinose M."/>
            <person name="Kikuchi H."/>
            <person name="Shiba T."/>
            <person name="Sakaki Y."/>
            <person name="Hattori M."/>
            <person name="Omura S."/>
        </authorList>
    </citation>
    <scope>NUCLEOTIDE SEQUENCE [LARGE SCALE GENOMIC DNA]</scope>
    <source>
        <strain>ATCC 31267 / DSM 46492 / JCM 5070 / NBRC 14893 / NCIMB 12804 / NRRL 8165 / MA-4680</strain>
    </source>
</reference>
<reference key="3">
    <citation type="journal article" date="2011" name="Biochemistry">
        <title>Genome mining in Streptomyces. Elucidation of the role of Baeyer-Villiger monooxygenases and non-heme iron-dependent dehydrogenase/oxygenases in the final steps of the biosynthesis of pentalenolactone and neopentalenolactone.</title>
        <authorList>
            <person name="Seo M.J."/>
            <person name="Zhu D."/>
            <person name="Endo S."/>
            <person name="Ikeda H."/>
            <person name="Cane D.E."/>
        </authorList>
    </citation>
    <scope>FUNCTION</scope>
    <scope>CATALYTIC ACTIVITY</scope>
    <scope>PATHWAY</scope>
    <scope>COFACTOR</scope>
    <scope>DISRUPTION PHENOTYPE</scope>
    <source>
        <strain>ATCC 31267 / DSM 46492 / JCM 5070 / NBRC 14893 / NCIMB 12804 / NRRL 8165 / MA-4680</strain>
    </source>
</reference>
<proteinExistence type="evidence at protein level"/>
<keyword id="KW-0045">Antibiotic biosynthesis</keyword>
<keyword id="KW-0223">Dioxygenase</keyword>
<keyword id="KW-0408">Iron</keyword>
<keyword id="KW-0479">Metal-binding</keyword>
<keyword id="KW-0560">Oxidoreductase</keyword>
<keyword id="KW-1185">Reference proteome</keyword>
<keyword id="KW-0847">Vitamin C</keyword>
<accession>Q82IY7</accession>